<proteinExistence type="inferred from homology"/>
<keyword id="KW-0066">ATP synthesis</keyword>
<keyword id="KW-0997">Cell inner membrane</keyword>
<keyword id="KW-1003">Cell membrane</keyword>
<keyword id="KW-0139">CF(1)</keyword>
<keyword id="KW-0375">Hydrogen ion transport</keyword>
<keyword id="KW-0406">Ion transport</keyword>
<keyword id="KW-0472">Membrane</keyword>
<keyword id="KW-1185">Reference proteome</keyword>
<keyword id="KW-0813">Transport</keyword>
<evidence type="ECO:0000255" key="1">
    <source>
        <dbReference type="HAMAP-Rule" id="MF_01416"/>
    </source>
</evidence>
<comment type="function">
    <text evidence="1">F(1)F(0) ATP synthase produces ATP from ADP in the presence of a proton or sodium gradient. F-type ATPases consist of two structural domains, F(1) containing the extramembraneous catalytic core and F(0) containing the membrane proton channel, linked together by a central stalk and a peripheral stalk. During catalysis, ATP synthesis in the catalytic domain of F(1) is coupled via a rotary mechanism of the central stalk subunits to proton translocation.</text>
</comment>
<comment type="function">
    <text evidence="1">This protein is part of the stalk that links CF(0) to CF(1). It either transmits conformational changes from CF(0) to CF(1) or is implicated in proton conduction.</text>
</comment>
<comment type="subunit">
    <text evidence="1">F-type ATPases have 2 components, F(1) - the catalytic core - and F(0) - the membrane proton channel. F(1) has five subunits: alpha(3), beta(3), gamma(1), delta(1), epsilon(1). F(0) has three main subunits: a(1), b(2) and c(10-14). The alpha and beta chains form an alternating ring which encloses part of the gamma chain. F(1) is attached to F(0) by a central stalk formed by the gamma and epsilon chains, while a peripheral stalk is formed by the delta and b chains.</text>
</comment>
<comment type="subcellular location">
    <subcellularLocation>
        <location evidence="1">Cell inner membrane</location>
        <topology evidence="1">Peripheral membrane protein</topology>
    </subcellularLocation>
</comment>
<comment type="similarity">
    <text evidence="1">Belongs to the ATPase delta chain family.</text>
</comment>
<accession>A6WXW8</accession>
<dbReference type="EMBL" id="CP000758">
    <property type="protein sequence ID" value="ABS13822.1"/>
    <property type="molecule type" value="Genomic_DNA"/>
</dbReference>
<dbReference type="RefSeq" id="WP_012091258.1">
    <property type="nucleotide sequence ID" value="NC_009667.1"/>
</dbReference>
<dbReference type="SMR" id="A6WXW8"/>
<dbReference type="STRING" id="439375.Oant_1102"/>
<dbReference type="KEGG" id="oan:Oant_1102"/>
<dbReference type="eggNOG" id="COG0712">
    <property type="taxonomic scope" value="Bacteria"/>
</dbReference>
<dbReference type="HOGENOM" id="CLU_085114_0_1_5"/>
<dbReference type="PhylomeDB" id="A6WXW8"/>
<dbReference type="Proteomes" id="UP000002301">
    <property type="component" value="Chromosome 1"/>
</dbReference>
<dbReference type="GO" id="GO:0005886">
    <property type="term" value="C:plasma membrane"/>
    <property type="evidence" value="ECO:0007669"/>
    <property type="project" value="UniProtKB-SubCell"/>
</dbReference>
<dbReference type="GO" id="GO:0045259">
    <property type="term" value="C:proton-transporting ATP synthase complex"/>
    <property type="evidence" value="ECO:0007669"/>
    <property type="project" value="UniProtKB-KW"/>
</dbReference>
<dbReference type="GO" id="GO:0046933">
    <property type="term" value="F:proton-transporting ATP synthase activity, rotational mechanism"/>
    <property type="evidence" value="ECO:0007669"/>
    <property type="project" value="UniProtKB-UniRule"/>
</dbReference>
<dbReference type="Gene3D" id="1.10.520.20">
    <property type="entry name" value="N-terminal domain of the delta subunit of the F1F0-ATP synthase"/>
    <property type="match status" value="1"/>
</dbReference>
<dbReference type="HAMAP" id="MF_01416">
    <property type="entry name" value="ATP_synth_delta_bact"/>
    <property type="match status" value="1"/>
</dbReference>
<dbReference type="InterPro" id="IPR026015">
    <property type="entry name" value="ATP_synth_OSCP/delta_N_sf"/>
</dbReference>
<dbReference type="InterPro" id="IPR020781">
    <property type="entry name" value="ATPase_OSCP/d_CS"/>
</dbReference>
<dbReference type="InterPro" id="IPR000711">
    <property type="entry name" value="ATPase_OSCP/dsu"/>
</dbReference>
<dbReference type="NCBIfam" id="TIGR01145">
    <property type="entry name" value="ATP_synt_delta"/>
    <property type="match status" value="1"/>
</dbReference>
<dbReference type="NCBIfam" id="NF004402">
    <property type="entry name" value="PRK05758.2-2"/>
    <property type="match status" value="1"/>
</dbReference>
<dbReference type="NCBIfam" id="NF004406">
    <property type="entry name" value="PRK05758.3-2"/>
    <property type="match status" value="1"/>
</dbReference>
<dbReference type="PANTHER" id="PTHR11910">
    <property type="entry name" value="ATP SYNTHASE DELTA CHAIN"/>
    <property type="match status" value="1"/>
</dbReference>
<dbReference type="Pfam" id="PF00213">
    <property type="entry name" value="OSCP"/>
    <property type="match status" value="1"/>
</dbReference>
<dbReference type="PRINTS" id="PR00125">
    <property type="entry name" value="ATPASEDELTA"/>
</dbReference>
<dbReference type="SUPFAM" id="SSF47928">
    <property type="entry name" value="N-terminal domain of the delta subunit of the F1F0-ATP synthase"/>
    <property type="match status" value="1"/>
</dbReference>
<dbReference type="PROSITE" id="PS00389">
    <property type="entry name" value="ATPASE_DELTA"/>
    <property type="match status" value="1"/>
</dbReference>
<feature type="chain" id="PRO_0000371043" description="ATP synthase subunit delta">
    <location>
        <begin position="1"/>
        <end position="186"/>
    </location>
</feature>
<protein>
    <recommendedName>
        <fullName evidence="1">ATP synthase subunit delta</fullName>
    </recommendedName>
    <alternativeName>
        <fullName evidence="1">ATP synthase F(1) sector subunit delta</fullName>
    </alternativeName>
    <alternativeName>
        <fullName evidence="1">F-type ATPase subunit delta</fullName>
        <shortName evidence="1">F-ATPase subunit delta</shortName>
    </alternativeName>
</protein>
<name>ATPD_BRUA4</name>
<organism>
    <name type="scientific">Brucella anthropi (strain ATCC 49188 / DSM 6882 / CCUG 24695 / JCM 21032 / LMG 3331 / NBRC 15819 / NCTC 12168 / Alc 37)</name>
    <name type="common">Ochrobactrum anthropi</name>
    <dbReference type="NCBI Taxonomy" id="439375"/>
    <lineage>
        <taxon>Bacteria</taxon>
        <taxon>Pseudomonadati</taxon>
        <taxon>Pseudomonadota</taxon>
        <taxon>Alphaproteobacteria</taxon>
        <taxon>Hyphomicrobiales</taxon>
        <taxon>Brucellaceae</taxon>
        <taxon>Brucella/Ochrobactrum group</taxon>
        <taxon>Brucella</taxon>
    </lineage>
</organism>
<gene>
    <name evidence="1" type="primary">atpH</name>
    <name type="ordered locus">Oant_1102</name>
</gene>
<sequence length="186" mass="19650">MAETSSLISGVAQRYAGSLFELALDAKSVAAVEKDLDRFEALLSGSEDLKRLISSPVFSSEDQLHAIGALADKAGIKGLVGNFLRVVARNRRLFALPGIIAAFRKIAAEHRGEVSADVISAHELSAAQQNELKATLKGVAGKDVTINVTVDPSILGGLIVKMGSRQIDTSLRTKLSSLKLALKEVG</sequence>
<reference key="1">
    <citation type="journal article" date="2011" name="J. Bacteriol.">
        <title>Genome of Ochrobactrum anthropi ATCC 49188 T, a versatile opportunistic pathogen and symbiont of several eukaryotic hosts.</title>
        <authorList>
            <person name="Chain P.S."/>
            <person name="Lang D.M."/>
            <person name="Comerci D.J."/>
            <person name="Malfatti S.A."/>
            <person name="Vergez L.M."/>
            <person name="Shin M."/>
            <person name="Ugalde R.A."/>
            <person name="Garcia E."/>
            <person name="Tolmasky M.E."/>
        </authorList>
    </citation>
    <scope>NUCLEOTIDE SEQUENCE [LARGE SCALE GENOMIC DNA]</scope>
    <source>
        <strain>ATCC 49188 / DSM 6882 / CCUG 24695 / JCM 21032 / LMG 3331 / NBRC 15819 / NCTC 12168 / Alc 37</strain>
    </source>
</reference>